<feature type="chain" id="PRO_0000128691" description="Putative Fe(2+) transport protein A">
    <location>
        <begin position="1"/>
        <end position="76"/>
    </location>
</feature>
<gene>
    <name type="ordered locus">HP_0585.1</name>
</gene>
<comment type="function">
    <text evidence="1">Might be involved in Fe(2+) ion uptake (By similarity).</text>
</comment>
<comment type="similarity">
    <text evidence="2">Belongs to the FeoA family.</text>
</comment>
<protein>
    <recommendedName>
        <fullName>Putative Fe(2+) transport protein A</fullName>
    </recommendedName>
</protein>
<dbReference type="EMBL" id="AE000511">
    <property type="status" value="NOT_ANNOTATED_CDS"/>
    <property type="molecule type" value="Genomic_DNA"/>
</dbReference>
<dbReference type="RefSeq" id="WP_000174130.1">
    <property type="nucleotide sequence ID" value="NC_018939.1"/>
</dbReference>
<dbReference type="RefSeq" id="YP_009112935.1">
    <property type="nucleotide sequence ID" value="NC_000915.1"/>
</dbReference>
<dbReference type="SMR" id="P57798"/>
<dbReference type="PaxDb" id="85962-C694_03020"/>
<dbReference type="KEGG" id="heo:C694_03020"/>
<dbReference type="PATRIC" id="fig|85962.47.peg.631"/>
<dbReference type="eggNOG" id="COG1918">
    <property type="taxonomic scope" value="Bacteria"/>
</dbReference>
<dbReference type="InParanoid" id="P57798"/>
<dbReference type="OrthoDB" id="5334830at2"/>
<dbReference type="Proteomes" id="UP000000429">
    <property type="component" value="Chromosome"/>
</dbReference>
<dbReference type="GO" id="GO:0046914">
    <property type="term" value="F:transition metal ion binding"/>
    <property type="evidence" value="ECO:0007669"/>
    <property type="project" value="InterPro"/>
</dbReference>
<dbReference type="GO" id="GO:0006826">
    <property type="term" value="P:iron ion transport"/>
    <property type="evidence" value="ECO:0007669"/>
    <property type="project" value="UniProtKB-KW"/>
</dbReference>
<dbReference type="Gene3D" id="2.30.30.90">
    <property type="match status" value="1"/>
</dbReference>
<dbReference type="InterPro" id="IPR007167">
    <property type="entry name" value="Fe-transptr_FeoA-like"/>
</dbReference>
<dbReference type="InterPro" id="IPR038157">
    <property type="entry name" value="FeoA_core_dom"/>
</dbReference>
<dbReference type="InterPro" id="IPR008988">
    <property type="entry name" value="Transcriptional_repressor_C"/>
</dbReference>
<dbReference type="Pfam" id="PF04023">
    <property type="entry name" value="FeoA"/>
    <property type="match status" value="1"/>
</dbReference>
<dbReference type="SMART" id="SM00899">
    <property type="entry name" value="FeoA"/>
    <property type="match status" value="1"/>
</dbReference>
<dbReference type="SUPFAM" id="SSF50037">
    <property type="entry name" value="C-terminal domain of transcriptional repressors"/>
    <property type="match status" value="1"/>
</dbReference>
<proteinExistence type="inferred from homology"/>
<evidence type="ECO:0000250" key="1">
    <source>
        <dbReference type="UniProtKB" id="P0AEL3"/>
    </source>
</evidence>
<evidence type="ECO:0000305" key="2"/>
<sequence length="76" mass="8719">MTLNEAIKDKVYEIVEIANCDEALKKRFLSFGIHEGVQCILLHYSMKKATLSVKINRIQVALRSHEAQYLVIKESV</sequence>
<name>FEOA_HELPY</name>
<keyword id="KW-0406">Ion transport</keyword>
<keyword id="KW-0408">Iron</keyword>
<keyword id="KW-0410">Iron transport</keyword>
<keyword id="KW-1185">Reference proteome</keyword>
<keyword id="KW-0813">Transport</keyword>
<organism>
    <name type="scientific">Helicobacter pylori (strain ATCC 700392 / 26695)</name>
    <name type="common">Campylobacter pylori</name>
    <dbReference type="NCBI Taxonomy" id="85962"/>
    <lineage>
        <taxon>Bacteria</taxon>
        <taxon>Pseudomonadati</taxon>
        <taxon>Campylobacterota</taxon>
        <taxon>Epsilonproteobacteria</taxon>
        <taxon>Campylobacterales</taxon>
        <taxon>Helicobacteraceae</taxon>
        <taxon>Helicobacter</taxon>
    </lineage>
</organism>
<accession>P57798</accession>
<reference key="1">
    <citation type="journal article" date="1997" name="Nature">
        <title>The complete genome sequence of the gastric pathogen Helicobacter pylori.</title>
        <authorList>
            <person name="Tomb J.-F."/>
            <person name="White O."/>
            <person name="Kerlavage A.R."/>
            <person name="Clayton R.A."/>
            <person name="Sutton G.G."/>
            <person name="Fleischmann R.D."/>
            <person name="Ketchum K.A."/>
            <person name="Klenk H.-P."/>
            <person name="Gill S.R."/>
            <person name="Dougherty B.A."/>
            <person name="Nelson K.E."/>
            <person name="Quackenbush J."/>
            <person name="Zhou L."/>
            <person name="Kirkness E.F."/>
            <person name="Peterson S.N."/>
            <person name="Loftus B.J."/>
            <person name="Richardson D.L."/>
            <person name="Dodson R.J."/>
            <person name="Khalak H.G."/>
            <person name="Glodek A."/>
            <person name="McKenney K."/>
            <person name="FitzGerald L.M."/>
            <person name="Lee N."/>
            <person name="Adams M.D."/>
            <person name="Hickey E.K."/>
            <person name="Berg D.E."/>
            <person name="Gocayne J.D."/>
            <person name="Utterback T.R."/>
            <person name="Peterson J.D."/>
            <person name="Kelley J.M."/>
            <person name="Cotton M.D."/>
            <person name="Weidman J.F."/>
            <person name="Fujii C."/>
            <person name="Bowman C."/>
            <person name="Watthey L."/>
            <person name="Wallin E."/>
            <person name="Hayes W.S."/>
            <person name="Borodovsky M."/>
            <person name="Karp P.D."/>
            <person name="Smith H.O."/>
            <person name="Fraser C.M."/>
            <person name="Venter J.C."/>
        </authorList>
    </citation>
    <scope>NUCLEOTIDE SEQUENCE [LARGE SCALE GENOMIC DNA]</scope>
    <source>
        <strain>ATCC 700392 / 26695</strain>
    </source>
</reference>
<reference key="2">
    <citation type="unpublished observations" date="2001-03">
        <authorList>
            <person name="Medigue C."/>
            <person name="Bocs S."/>
        </authorList>
    </citation>
    <scope>IDENTIFICATION</scope>
</reference>